<accession>Q9ABV3</accession>
<organism>
    <name type="scientific">Caulobacter vibrioides (strain ATCC 19089 / CIP 103742 / CB 15)</name>
    <name type="common">Caulobacter crescentus</name>
    <dbReference type="NCBI Taxonomy" id="190650"/>
    <lineage>
        <taxon>Bacteria</taxon>
        <taxon>Pseudomonadati</taxon>
        <taxon>Pseudomonadota</taxon>
        <taxon>Alphaproteobacteria</taxon>
        <taxon>Caulobacterales</taxon>
        <taxon>Caulobacteraceae</taxon>
        <taxon>Caulobacter</taxon>
    </lineage>
</organism>
<name>GLMM_CAUVC</name>
<proteinExistence type="inferred from homology"/>
<sequence length="448" mass="47384">MSKRAYFGTDGIRGQANKHPMTAEVALRVGLAAGKLFRSQDERRHLVVIGKDTRLSGYMIEPALVAGLTSVGLDVRLFGPLPTPAVAMMTRSMRADLGIMISASHNSFADNGIKLFGPDGYKLSDAQELGIEALMDQGLQEGLAAPRELGRVKRIDDAQARYVEIVKATFPRHLNLSGLRIVIDCANGAAYKVAPTALYELGAEVITLGVSPDGTNINEECGSTHPEAMAKMVREYRADIGIALDGDADRLVICDEKGVVVDGDQIMAIIAAASHKAGTLKGGGVVATVMSNLGLERQLNTMGLSLERTAVGDRYVMQRMREGGFNVGGEQSGHLILSDFSTTGDGLIAALQVLAVMVETDKPMSALGRQFEPVPQLLENVRFVGGKPLEAAAVKEAIADGEAQLNGAGRIVVRASGTEPLIRIMAEGDDPALVKKVVKSIASAVKAA</sequence>
<gene>
    <name evidence="1" type="primary">glmM</name>
    <name type="ordered locus">CC_0117</name>
</gene>
<comment type="function">
    <text evidence="1">Catalyzes the conversion of glucosamine-6-phosphate to glucosamine-1-phosphate.</text>
</comment>
<comment type="catalytic activity">
    <reaction evidence="1">
        <text>alpha-D-glucosamine 1-phosphate = D-glucosamine 6-phosphate</text>
        <dbReference type="Rhea" id="RHEA:23424"/>
        <dbReference type="ChEBI" id="CHEBI:58516"/>
        <dbReference type="ChEBI" id="CHEBI:58725"/>
        <dbReference type="EC" id="5.4.2.10"/>
    </reaction>
</comment>
<comment type="cofactor">
    <cofactor evidence="1">
        <name>Mg(2+)</name>
        <dbReference type="ChEBI" id="CHEBI:18420"/>
    </cofactor>
    <text evidence="1">Binds 1 Mg(2+) ion per subunit.</text>
</comment>
<comment type="PTM">
    <text evidence="1">Activated by phosphorylation.</text>
</comment>
<comment type="similarity">
    <text evidence="1">Belongs to the phosphohexose mutase family.</text>
</comment>
<evidence type="ECO:0000255" key="1">
    <source>
        <dbReference type="HAMAP-Rule" id="MF_01554"/>
    </source>
</evidence>
<reference key="1">
    <citation type="journal article" date="2001" name="Proc. Natl. Acad. Sci. U.S.A.">
        <title>Complete genome sequence of Caulobacter crescentus.</title>
        <authorList>
            <person name="Nierman W.C."/>
            <person name="Feldblyum T.V."/>
            <person name="Laub M.T."/>
            <person name="Paulsen I.T."/>
            <person name="Nelson K.E."/>
            <person name="Eisen J.A."/>
            <person name="Heidelberg J.F."/>
            <person name="Alley M.R.K."/>
            <person name="Ohta N."/>
            <person name="Maddock J.R."/>
            <person name="Potocka I."/>
            <person name="Nelson W.C."/>
            <person name="Newton A."/>
            <person name="Stephens C."/>
            <person name="Phadke N.D."/>
            <person name="Ely B."/>
            <person name="DeBoy R.T."/>
            <person name="Dodson R.J."/>
            <person name="Durkin A.S."/>
            <person name="Gwinn M.L."/>
            <person name="Haft D.H."/>
            <person name="Kolonay J.F."/>
            <person name="Smit J."/>
            <person name="Craven M.B."/>
            <person name="Khouri H.M."/>
            <person name="Shetty J."/>
            <person name="Berry K.J."/>
            <person name="Utterback T.R."/>
            <person name="Tran K."/>
            <person name="Wolf A.M."/>
            <person name="Vamathevan J.J."/>
            <person name="Ermolaeva M.D."/>
            <person name="White O."/>
            <person name="Salzberg S.L."/>
            <person name="Venter J.C."/>
            <person name="Shapiro L."/>
            <person name="Fraser C.M."/>
        </authorList>
    </citation>
    <scope>NUCLEOTIDE SEQUENCE [LARGE SCALE GENOMIC DNA]</scope>
    <source>
        <strain>ATCC 19089 / CIP 103742 / CB 15</strain>
    </source>
</reference>
<feature type="chain" id="PRO_0000147866" description="Phosphoglucosamine mutase">
    <location>
        <begin position="1"/>
        <end position="448"/>
    </location>
</feature>
<feature type="active site" description="Phosphoserine intermediate" evidence="1">
    <location>
        <position position="104"/>
    </location>
</feature>
<feature type="binding site" description="via phosphate group" evidence="1">
    <location>
        <position position="104"/>
    </location>
    <ligand>
        <name>Mg(2+)</name>
        <dbReference type="ChEBI" id="CHEBI:18420"/>
    </ligand>
</feature>
<feature type="binding site" evidence="1">
    <location>
        <position position="245"/>
    </location>
    <ligand>
        <name>Mg(2+)</name>
        <dbReference type="ChEBI" id="CHEBI:18420"/>
    </ligand>
</feature>
<feature type="binding site" evidence="1">
    <location>
        <position position="247"/>
    </location>
    <ligand>
        <name>Mg(2+)</name>
        <dbReference type="ChEBI" id="CHEBI:18420"/>
    </ligand>
</feature>
<feature type="binding site" evidence="1">
    <location>
        <position position="249"/>
    </location>
    <ligand>
        <name>Mg(2+)</name>
        <dbReference type="ChEBI" id="CHEBI:18420"/>
    </ligand>
</feature>
<feature type="modified residue" description="Phosphoserine" evidence="1">
    <location>
        <position position="104"/>
    </location>
</feature>
<protein>
    <recommendedName>
        <fullName evidence="1">Phosphoglucosamine mutase</fullName>
        <ecNumber evidence="1">5.4.2.10</ecNumber>
    </recommendedName>
</protein>
<dbReference type="EC" id="5.4.2.10" evidence="1"/>
<dbReference type="EMBL" id="AE005673">
    <property type="protein sequence ID" value="AAK22104.1"/>
    <property type="molecule type" value="Genomic_DNA"/>
</dbReference>
<dbReference type="PIR" id="D87263">
    <property type="entry name" value="D87263"/>
</dbReference>
<dbReference type="RefSeq" id="NP_418936.1">
    <property type="nucleotide sequence ID" value="NC_002696.2"/>
</dbReference>
<dbReference type="RefSeq" id="WP_010918006.1">
    <property type="nucleotide sequence ID" value="NC_002696.2"/>
</dbReference>
<dbReference type="SMR" id="Q9ABV3"/>
<dbReference type="STRING" id="190650.CC_0117"/>
<dbReference type="EnsemblBacteria" id="AAK22104">
    <property type="protein sequence ID" value="AAK22104"/>
    <property type="gene ID" value="CC_0117"/>
</dbReference>
<dbReference type="KEGG" id="ccr:CC_0117"/>
<dbReference type="PATRIC" id="fig|190650.5.peg.114"/>
<dbReference type="eggNOG" id="COG1109">
    <property type="taxonomic scope" value="Bacteria"/>
</dbReference>
<dbReference type="HOGENOM" id="CLU_016950_7_0_5"/>
<dbReference type="BioCyc" id="CAULO:CC0117-MONOMER"/>
<dbReference type="Proteomes" id="UP000001816">
    <property type="component" value="Chromosome"/>
</dbReference>
<dbReference type="GO" id="GO:0005829">
    <property type="term" value="C:cytosol"/>
    <property type="evidence" value="ECO:0007669"/>
    <property type="project" value="TreeGrafter"/>
</dbReference>
<dbReference type="GO" id="GO:0000287">
    <property type="term" value="F:magnesium ion binding"/>
    <property type="evidence" value="ECO:0007669"/>
    <property type="project" value="UniProtKB-UniRule"/>
</dbReference>
<dbReference type="GO" id="GO:0008966">
    <property type="term" value="F:phosphoglucosamine mutase activity"/>
    <property type="evidence" value="ECO:0007669"/>
    <property type="project" value="UniProtKB-UniRule"/>
</dbReference>
<dbReference type="GO" id="GO:0004615">
    <property type="term" value="F:phosphomannomutase activity"/>
    <property type="evidence" value="ECO:0007669"/>
    <property type="project" value="TreeGrafter"/>
</dbReference>
<dbReference type="GO" id="GO:0005975">
    <property type="term" value="P:carbohydrate metabolic process"/>
    <property type="evidence" value="ECO:0007669"/>
    <property type="project" value="InterPro"/>
</dbReference>
<dbReference type="GO" id="GO:0009252">
    <property type="term" value="P:peptidoglycan biosynthetic process"/>
    <property type="evidence" value="ECO:0007669"/>
    <property type="project" value="TreeGrafter"/>
</dbReference>
<dbReference type="GO" id="GO:0006048">
    <property type="term" value="P:UDP-N-acetylglucosamine biosynthetic process"/>
    <property type="evidence" value="ECO:0007669"/>
    <property type="project" value="TreeGrafter"/>
</dbReference>
<dbReference type="CDD" id="cd05802">
    <property type="entry name" value="GlmM"/>
    <property type="match status" value="1"/>
</dbReference>
<dbReference type="FunFam" id="3.30.310.50:FF:000001">
    <property type="entry name" value="Phosphoglucosamine mutase"/>
    <property type="match status" value="1"/>
</dbReference>
<dbReference type="FunFam" id="3.40.120.10:FF:000001">
    <property type="entry name" value="Phosphoglucosamine mutase"/>
    <property type="match status" value="1"/>
</dbReference>
<dbReference type="FunFam" id="3.40.120.10:FF:000003">
    <property type="entry name" value="Phosphoglucosamine mutase"/>
    <property type="match status" value="1"/>
</dbReference>
<dbReference type="Gene3D" id="3.40.120.10">
    <property type="entry name" value="Alpha-D-Glucose-1,6-Bisphosphate, subunit A, domain 3"/>
    <property type="match status" value="3"/>
</dbReference>
<dbReference type="Gene3D" id="3.30.310.50">
    <property type="entry name" value="Alpha-D-phosphohexomutase, C-terminal domain"/>
    <property type="match status" value="1"/>
</dbReference>
<dbReference type="HAMAP" id="MF_01554_B">
    <property type="entry name" value="GlmM_B"/>
    <property type="match status" value="1"/>
</dbReference>
<dbReference type="InterPro" id="IPR005844">
    <property type="entry name" value="A-D-PHexomutase_a/b/a-I"/>
</dbReference>
<dbReference type="InterPro" id="IPR016055">
    <property type="entry name" value="A-D-PHexomutase_a/b/a-I/II/III"/>
</dbReference>
<dbReference type="InterPro" id="IPR005845">
    <property type="entry name" value="A-D-PHexomutase_a/b/a-II"/>
</dbReference>
<dbReference type="InterPro" id="IPR005846">
    <property type="entry name" value="A-D-PHexomutase_a/b/a-III"/>
</dbReference>
<dbReference type="InterPro" id="IPR005843">
    <property type="entry name" value="A-D-PHexomutase_C"/>
</dbReference>
<dbReference type="InterPro" id="IPR036900">
    <property type="entry name" value="A-D-PHexomutase_C_sf"/>
</dbReference>
<dbReference type="InterPro" id="IPR005841">
    <property type="entry name" value="Alpha-D-phosphohexomutase_SF"/>
</dbReference>
<dbReference type="InterPro" id="IPR006352">
    <property type="entry name" value="GlmM_bact"/>
</dbReference>
<dbReference type="InterPro" id="IPR050060">
    <property type="entry name" value="Phosphoglucosamine_mutase"/>
</dbReference>
<dbReference type="NCBIfam" id="TIGR01455">
    <property type="entry name" value="glmM"/>
    <property type="match status" value="1"/>
</dbReference>
<dbReference type="NCBIfam" id="NF008139">
    <property type="entry name" value="PRK10887.1"/>
    <property type="match status" value="1"/>
</dbReference>
<dbReference type="PANTHER" id="PTHR42946:SF1">
    <property type="entry name" value="PHOSPHOGLUCOMUTASE (ALPHA-D-GLUCOSE-1,6-BISPHOSPHATE-DEPENDENT)"/>
    <property type="match status" value="1"/>
</dbReference>
<dbReference type="PANTHER" id="PTHR42946">
    <property type="entry name" value="PHOSPHOHEXOSE MUTASE"/>
    <property type="match status" value="1"/>
</dbReference>
<dbReference type="Pfam" id="PF02878">
    <property type="entry name" value="PGM_PMM_I"/>
    <property type="match status" value="1"/>
</dbReference>
<dbReference type="Pfam" id="PF02879">
    <property type="entry name" value="PGM_PMM_II"/>
    <property type="match status" value="1"/>
</dbReference>
<dbReference type="Pfam" id="PF02880">
    <property type="entry name" value="PGM_PMM_III"/>
    <property type="match status" value="1"/>
</dbReference>
<dbReference type="Pfam" id="PF00408">
    <property type="entry name" value="PGM_PMM_IV"/>
    <property type="match status" value="1"/>
</dbReference>
<dbReference type="PRINTS" id="PR00509">
    <property type="entry name" value="PGMPMM"/>
</dbReference>
<dbReference type="SUPFAM" id="SSF55957">
    <property type="entry name" value="Phosphoglucomutase, C-terminal domain"/>
    <property type="match status" value="1"/>
</dbReference>
<dbReference type="SUPFAM" id="SSF53738">
    <property type="entry name" value="Phosphoglucomutase, first 3 domains"/>
    <property type="match status" value="3"/>
</dbReference>
<keyword id="KW-0413">Isomerase</keyword>
<keyword id="KW-0460">Magnesium</keyword>
<keyword id="KW-0479">Metal-binding</keyword>
<keyword id="KW-0597">Phosphoprotein</keyword>
<keyword id="KW-1185">Reference proteome</keyword>